<comment type="function">
    <text evidence="3">Regulator of mitochondrial fusion: acts by forming homo- and heterodimers at the mitochondrial outer membrane and facilitating the formation of PLD6/MitoPLD dimers. May act by regulating phospholipid metabolism via PLD6/MitoPLD.</text>
</comment>
<comment type="subunit">
    <text evidence="3">Homodimer and heterodimer; forms heterodimers with MIGA2 (PubMed:26711011). Interacts with PLD6/MitoPLD (PubMed:26711011).</text>
</comment>
<comment type="subcellular location">
    <subcellularLocation>
        <location evidence="3">Mitochondrion outer membrane</location>
        <topology evidence="2">Single-pass membrane protein</topology>
    </subcellularLocation>
</comment>
<comment type="alternative products">
    <event type="alternative splicing"/>
    <isoform>
        <id>Q8NAN2-1</id>
        <name>1</name>
        <sequence type="displayed"/>
    </isoform>
    <isoform>
        <id>Q8NAN2-2</id>
        <name>2</name>
        <sequence type="described" ref="VSP_024878 VSP_024879"/>
    </isoform>
</comment>
<comment type="similarity">
    <text evidence="6">Belongs to the mitoguardin family.</text>
</comment>
<comment type="caution">
    <text evidence="6">It is uncertain whether Met-1 or Met-33 is the initiator.</text>
</comment>
<sequence length="632" mass="71006">MSDCCSAPGISWEAGVGRPAVPGLELQIRRGAMSEETVSESQFSLKTAALRVFDLPLTWYYSLSQIKFSPVAKKLFVVTAVSAISVIFLAHHFKRKRGKKKGKILPWEPEHLILEYTKRAASDKGSSCSSSRQNLTLSLSSTKDKGSQVCNYANGGLFSKYSGSAQSLASVQSVNSCHSCACGNSNSWDKADEDDIKLVNIPVTTPENLYLMGMELFEEALRRWEQALTFRNRQAEDEACGSIKLGAGDAIAEENVDDIISTEFIHKLEALLQRAYRLQEEFEATLGASDPNSLADDIDKDTDITMKGNVEDFGLRDTLSIASTDSFASAAELAEHREVRHTYSLESLCHCPFYEEAMHLVEEGKIYSRVLRTEMLECLGDSDFLAKLHCIRQAFQVILSESANRIFLAESGRKILSALIVKARKNPKKFEDVFDEMIYFLEQTDHWGSTEMELAARGVKNLNFYDVVLDFILMDSFEDLENPPTSIQNVVNNRWLNSSFKETAVASSCWSVLKQKRQQMKIPDGFFAHFYAICEHISPVLAWGFLGPRNSLYDLCCFFKNQVLLFLKDIFDFEKVRYSSTETLAEDLMQLLIRRTELLMAYLEADALRHTSSCLSSHGHVMSTGLLEAKVQ</sequence>
<dbReference type="EMBL" id="AK092412">
    <property type="protein sequence ID" value="BAC03880.1"/>
    <property type="molecule type" value="mRNA"/>
</dbReference>
<dbReference type="EMBL" id="BX537792">
    <property type="protein sequence ID" value="CAD97844.1"/>
    <property type="molecule type" value="mRNA"/>
</dbReference>
<dbReference type="EMBL" id="BX641170">
    <property type="protein sequence ID" value="CAE46075.1"/>
    <property type="molecule type" value="mRNA"/>
</dbReference>
<dbReference type="EMBL" id="BC130387">
    <property type="protein sequence ID" value="AAI30388.1"/>
    <property type="molecule type" value="mRNA"/>
</dbReference>
<dbReference type="CCDS" id="CCDS681.1">
    <molecule id="Q8NAN2-1"/>
</dbReference>
<dbReference type="RefSeq" id="NP_001257313.1">
    <property type="nucleotide sequence ID" value="NM_001270384.1"/>
</dbReference>
<dbReference type="RefSeq" id="NP_940951.1">
    <molecule id="Q8NAN2-1"/>
    <property type="nucleotide sequence ID" value="NM_198549.4"/>
</dbReference>
<dbReference type="SMR" id="Q8NAN2"/>
<dbReference type="BioGRID" id="131945">
    <property type="interactions" value="51"/>
</dbReference>
<dbReference type="FunCoup" id="Q8NAN2">
    <property type="interactions" value="2358"/>
</dbReference>
<dbReference type="IntAct" id="Q8NAN2">
    <property type="interactions" value="32"/>
</dbReference>
<dbReference type="MINT" id="Q8NAN2"/>
<dbReference type="STRING" id="9606.ENSP00000393675"/>
<dbReference type="TCDB" id="8.A.167.1.3">
    <property type="family name" value="the mitoguardin (miga) family"/>
</dbReference>
<dbReference type="iPTMnet" id="Q8NAN2"/>
<dbReference type="PhosphoSitePlus" id="Q8NAN2"/>
<dbReference type="SwissPalm" id="Q8NAN2"/>
<dbReference type="BioMuta" id="MIGA1"/>
<dbReference type="DMDM" id="74729966"/>
<dbReference type="jPOST" id="Q8NAN2"/>
<dbReference type="MassIVE" id="Q8NAN2"/>
<dbReference type="PaxDb" id="9606-ENSP00000393675"/>
<dbReference type="PeptideAtlas" id="Q8NAN2"/>
<dbReference type="ProteomicsDB" id="72682">
    <molecule id="Q8NAN2-1"/>
</dbReference>
<dbReference type="ProteomicsDB" id="72683">
    <molecule id="Q8NAN2-2"/>
</dbReference>
<dbReference type="Pumba" id="Q8NAN2"/>
<dbReference type="Antibodypedia" id="2672">
    <property type="antibodies" value="27 antibodies from 14 providers"/>
</dbReference>
<dbReference type="DNASU" id="374986"/>
<dbReference type="Ensembl" id="ENST00000710932.1">
    <molecule id="Q8NAN2-1"/>
    <property type="protein sequence ID" value="ENSP00000518551.1"/>
    <property type="gene ID" value="ENSG00000180488.17"/>
</dbReference>
<dbReference type="GeneID" id="374986"/>
<dbReference type="KEGG" id="hsa:374986"/>
<dbReference type="UCSC" id="uc001dhx.5">
    <molecule id="Q8NAN2-1"/>
    <property type="organism name" value="human"/>
</dbReference>
<dbReference type="AGR" id="HGNC:24741"/>
<dbReference type="CTD" id="374986"/>
<dbReference type="DisGeNET" id="374986"/>
<dbReference type="GeneCards" id="MIGA1"/>
<dbReference type="HGNC" id="HGNC:24741">
    <property type="gene designation" value="MIGA1"/>
</dbReference>
<dbReference type="HPA" id="ENSG00000180488">
    <property type="expression patterns" value="Low tissue specificity"/>
</dbReference>
<dbReference type="MIM" id="616773">
    <property type="type" value="gene"/>
</dbReference>
<dbReference type="neXtProt" id="NX_Q8NAN2"/>
<dbReference type="OpenTargets" id="ENSG00000180488"/>
<dbReference type="PharmGKB" id="PA142671836"/>
<dbReference type="VEuPathDB" id="HostDB:ENSG00000180488"/>
<dbReference type="eggNOG" id="KOG3831">
    <property type="taxonomic scope" value="Eukaryota"/>
</dbReference>
<dbReference type="GeneTree" id="ENSGT00390000008565"/>
<dbReference type="InParanoid" id="Q8NAN2"/>
<dbReference type="OrthoDB" id="8880065at2759"/>
<dbReference type="PAN-GO" id="Q8NAN2">
    <property type="GO annotations" value="1 GO annotation based on evolutionary models"/>
</dbReference>
<dbReference type="PhylomeDB" id="Q8NAN2"/>
<dbReference type="TreeFam" id="TF313896"/>
<dbReference type="PathwayCommons" id="Q8NAN2"/>
<dbReference type="Reactome" id="R-HSA-1483166">
    <property type="pathway name" value="Synthesis of PA"/>
</dbReference>
<dbReference type="SignaLink" id="Q8NAN2"/>
<dbReference type="BioGRID-ORCS" id="374986">
    <property type="hits" value="11 hits in 1157 CRISPR screens"/>
</dbReference>
<dbReference type="ChiTaRS" id="MIGA1">
    <property type="organism name" value="human"/>
</dbReference>
<dbReference type="GenomeRNAi" id="374986"/>
<dbReference type="Pharos" id="Q8NAN2">
    <property type="development level" value="Tbio"/>
</dbReference>
<dbReference type="PRO" id="PR:Q8NAN2"/>
<dbReference type="Proteomes" id="UP000005640">
    <property type="component" value="Chromosome 1"/>
</dbReference>
<dbReference type="RNAct" id="Q8NAN2">
    <property type="molecule type" value="protein"/>
</dbReference>
<dbReference type="Bgee" id="ENSG00000180488">
    <property type="expression patterns" value="Expressed in oviduct epithelium and 193 other cell types or tissues"/>
</dbReference>
<dbReference type="ExpressionAtlas" id="Q8NAN2">
    <property type="expression patterns" value="baseline and differential"/>
</dbReference>
<dbReference type="GO" id="GO:0005741">
    <property type="term" value="C:mitochondrial outer membrane"/>
    <property type="evidence" value="ECO:0007669"/>
    <property type="project" value="UniProtKB-SubCell"/>
</dbReference>
<dbReference type="GO" id="GO:0005739">
    <property type="term" value="C:mitochondrion"/>
    <property type="evidence" value="ECO:0000314"/>
    <property type="project" value="HPA"/>
</dbReference>
<dbReference type="GO" id="GO:0005886">
    <property type="term" value="C:plasma membrane"/>
    <property type="evidence" value="ECO:0000314"/>
    <property type="project" value="UniProtKB"/>
</dbReference>
<dbReference type="GO" id="GO:0046982">
    <property type="term" value="F:protein heterodimerization activity"/>
    <property type="evidence" value="ECO:0000314"/>
    <property type="project" value="UniProtKB"/>
</dbReference>
<dbReference type="GO" id="GO:0042803">
    <property type="term" value="F:protein homodimerization activity"/>
    <property type="evidence" value="ECO:0000314"/>
    <property type="project" value="UniProtKB"/>
</dbReference>
<dbReference type="GO" id="GO:0008053">
    <property type="term" value="P:mitochondrial fusion"/>
    <property type="evidence" value="ECO:0000314"/>
    <property type="project" value="UniProtKB"/>
</dbReference>
<dbReference type="InterPro" id="IPR019392">
    <property type="entry name" value="Miga"/>
</dbReference>
<dbReference type="PANTHER" id="PTHR21508">
    <property type="entry name" value="MITOGUARDIN"/>
    <property type="match status" value="1"/>
</dbReference>
<dbReference type="PANTHER" id="PTHR21508:SF3">
    <property type="entry name" value="MITOGUARDIN 1"/>
    <property type="match status" value="1"/>
</dbReference>
<dbReference type="Pfam" id="PF10265">
    <property type="entry name" value="Miga"/>
    <property type="match status" value="1"/>
</dbReference>
<evidence type="ECO:0000250" key="1">
    <source>
        <dbReference type="UniProtKB" id="Q4QQM5"/>
    </source>
</evidence>
<evidence type="ECO:0000255" key="2"/>
<evidence type="ECO:0000269" key="3">
    <source>
    </source>
</evidence>
<evidence type="ECO:0000303" key="4">
    <source>
    </source>
</evidence>
<evidence type="ECO:0000303" key="5">
    <source>
    </source>
</evidence>
<evidence type="ECO:0000305" key="6"/>
<evidence type="ECO:0000312" key="7">
    <source>
        <dbReference type="HGNC" id="HGNC:24741"/>
    </source>
</evidence>
<gene>
    <name evidence="5 7" type="primary">MIGA1</name>
    <name evidence="7" type="synonym">FAM73A</name>
</gene>
<proteinExistence type="evidence at protein level"/>
<protein>
    <recommendedName>
        <fullName evidence="5">Mitoguardin 1</fullName>
    </recommendedName>
    <alternativeName>
        <fullName evidence="6">Protein FAM73A</fullName>
    </alternativeName>
</protein>
<keyword id="KW-0025">Alternative splicing</keyword>
<keyword id="KW-0472">Membrane</keyword>
<keyword id="KW-0496">Mitochondrion</keyword>
<keyword id="KW-1000">Mitochondrion outer membrane</keyword>
<keyword id="KW-0597">Phosphoprotein</keyword>
<keyword id="KW-1267">Proteomics identification</keyword>
<keyword id="KW-1185">Reference proteome</keyword>
<keyword id="KW-0812">Transmembrane</keyword>
<keyword id="KW-1133">Transmembrane helix</keyword>
<feature type="chain" id="PRO_0000285646" description="Mitoguardin 1">
    <location>
        <begin position="1"/>
        <end position="632"/>
    </location>
</feature>
<feature type="transmembrane region" description="Helical" evidence="2">
    <location>
        <begin position="70"/>
        <end position="90"/>
    </location>
</feature>
<feature type="modified residue" description="Phosphoserine" evidence="1">
    <location>
        <position position="289"/>
    </location>
</feature>
<feature type="modified residue" description="Phosphoserine" evidence="1">
    <location>
        <position position="293"/>
    </location>
</feature>
<feature type="splice variant" id="VSP_024878" description="In isoform 2." evidence="4">
    <original>TEMLECLGDSDF</original>
    <variation>YHFSFVYVYEGY</variation>
    <location>
        <begin position="373"/>
        <end position="384"/>
    </location>
</feature>
<feature type="splice variant" id="VSP_024879" description="In isoform 2." evidence="4">
    <location>
        <begin position="385"/>
        <end position="632"/>
    </location>
</feature>
<reference key="1">
    <citation type="journal article" date="2004" name="Nat. Genet.">
        <title>Complete sequencing and characterization of 21,243 full-length human cDNAs.</title>
        <authorList>
            <person name="Ota T."/>
            <person name="Suzuki Y."/>
            <person name="Nishikawa T."/>
            <person name="Otsuki T."/>
            <person name="Sugiyama T."/>
            <person name="Irie R."/>
            <person name="Wakamatsu A."/>
            <person name="Hayashi K."/>
            <person name="Sato H."/>
            <person name="Nagai K."/>
            <person name="Kimura K."/>
            <person name="Makita H."/>
            <person name="Sekine M."/>
            <person name="Obayashi M."/>
            <person name="Nishi T."/>
            <person name="Shibahara T."/>
            <person name="Tanaka T."/>
            <person name="Ishii S."/>
            <person name="Yamamoto J."/>
            <person name="Saito K."/>
            <person name="Kawai Y."/>
            <person name="Isono Y."/>
            <person name="Nakamura Y."/>
            <person name="Nagahari K."/>
            <person name="Murakami K."/>
            <person name="Yasuda T."/>
            <person name="Iwayanagi T."/>
            <person name="Wagatsuma M."/>
            <person name="Shiratori A."/>
            <person name="Sudo H."/>
            <person name="Hosoiri T."/>
            <person name="Kaku Y."/>
            <person name="Kodaira H."/>
            <person name="Kondo H."/>
            <person name="Sugawara M."/>
            <person name="Takahashi M."/>
            <person name="Kanda K."/>
            <person name="Yokoi T."/>
            <person name="Furuya T."/>
            <person name="Kikkawa E."/>
            <person name="Omura Y."/>
            <person name="Abe K."/>
            <person name="Kamihara K."/>
            <person name="Katsuta N."/>
            <person name="Sato K."/>
            <person name="Tanikawa M."/>
            <person name="Yamazaki M."/>
            <person name="Ninomiya K."/>
            <person name="Ishibashi T."/>
            <person name="Yamashita H."/>
            <person name="Murakawa K."/>
            <person name="Fujimori K."/>
            <person name="Tanai H."/>
            <person name="Kimata M."/>
            <person name="Watanabe M."/>
            <person name="Hiraoka S."/>
            <person name="Chiba Y."/>
            <person name="Ishida S."/>
            <person name="Ono Y."/>
            <person name="Takiguchi S."/>
            <person name="Watanabe S."/>
            <person name="Yosida M."/>
            <person name="Hotuta T."/>
            <person name="Kusano J."/>
            <person name="Kanehori K."/>
            <person name="Takahashi-Fujii A."/>
            <person name="Hara H."/>
            <person name="Tanase T.-O."/>
            <person name="Nomura Y."/>
            <person name="Togiya S."/>
            <person name="Komai F."/>
            <person name="Hara R."/>
            <person name="Takeuchi K."/>
            <person name="Arita M."/>
            <person name="Imose N."/>
            <person name="Musashino K."/>
            <person name="Yuuki H."/>
            <person name="Oshima A."/>
            <person name="Sasaki N."/>
            <person name="Aotsuka S."/>
            <person name="Yoshikawa Y."/>
            <person name="Matsunawa H."/>
            <person name="Ichihara T."/>
            <person name="Shiohata N."/>
            <person name="Sano S."/>
            <person name="Moriya S."/>
            <person name="Momiyama H."/>
            <person name="Satoh N."/>
            <person name="Takami S."/>
            <person name="Terashima Y."/>
            <person name="Suzuki O."/>
            <person name="Nakagawa S."/>
            <person name="Senoh A."/>
            <person name="Mizoguchi H."/>
            <person name="Goto Y."/>
            <person name="Shimizu F."/>
            <person name="Wakebe H."/>
            <person name="Hishigaki H."/>
            <person name="Watanabe T."/>
            <person name="Sugiyama A."/>
            <person name="Takemoto M."/>
            <person name="Kawakami B."/>
            <person name="Yamazaki M."/>
            <person name="Watanabe K."/>
            <person name="Kumagai A."/>
            <person name="Itakura S."/>
            <person name="Fukuzumi Y."/>
            <person name="Fujimori Y."/>
            <person name="Komiyama M."/>
            <person name="Tashiro H."/>
            <person name="Tanigami A."/>
            <person name="Fujiwara T."/>
            <person name="Ono T."/>
            <person name="Yamada K."/>
            <person name="Fujii Y."/>
            <person name="Ozaki K."/>
            <person name="Hirao M."/>
            <person name="Ohmori Y."/>
            <person name="Kawabata A."/>
            <person name="Hikiji T."/>
            <person name="Kobatake N."/>
            <person name="Inagaki H."/>
            <person name="Ikema Y."/>
            <person name="Okamoto S."/>
            <person name="Okitani R."/>
            <person name="Kawakami T."/>
            <person name="Noguchi S."/>
            <person name="Itoh T."/>
            <person name="Shigeta K."/>
            <person name="Senba T."/>
            <person name="Matsumura K."/>
            <person name="Nakajima Y."/>
            <person name="Mizuno T."/>
            <person name="Morinaga M."/>
            <person name="Sasaki M."/>
            <person name="Togashi T."/>
            <person name="Oyama M."/>
            <person name="Hata H."/>
            <person name="Watanabe M."/>
            <person name="Komatsu T."/>
            <person name="Mizushima-Sugano J."/>
            <person name="Satoh T."/>
            <person name="Shirai Y."/>
            <person name="Takahashi Y."/>
            <person name="Nakagawa K."/>
            <person name="Okumura K."/>
            <person name="Nagase T."/>
            <person name="Nomura N."/>
            <person name="Kikuchi H."/>
            <person name="Masuho Y."/>
            <person name="Yamashita R."/>
            <person name="Nakai K."/>
            <person name="Yada T."/>
            <person name="Nakamura Y."/>
            <person name="Ohara O."/>
            <person name="Isogai T."/>
            <person name="Sugano S."/>
        </authorList>
    </citation>
    <scope>NUCLEOTIDE SEQUENCE [LARGE SCALE MRNA] (ISOFORM 1)</scope>
    <source>
        <tissue>Placenta</tissue>
    </source>
</reference>
<reference key="2">
    <citation type="journal article" date="2007" name="BMC Genomics">
        <title>The full-ORF clone resource of the German cDNA consortium.</title>
        <authorList>
            <person name="Bechtel S."/>
            <person name="Rosenfelder H."/>
            <person name="Duda A."/>
            <person name="Schmidt C.P."/>
            <person name="Ernst U."/>
            <person name="Wellenreuther R."/>
            <person name="Mehrle A."/>
            <person name="Schuster C."/>
            <person name="Bahr A."/>
            <person name="Bloecker H."/>
            <person name="Heubner D."/>
            <person name="Hoerlein A."/>
            <person name="Michel G."/>
            <person name="Wedler H."/>
            <person name="Koehrer K."/>
            <person name="Ottenwaelder B."/>
            <person name="Poustka A."/>
            <person name="Wiemann S."/>
            <person name="Schupp I."/>
        </authorList>
    </citation>
    <scope>NUCLEOTIDE SEQUENCE [LARGE SCALE MRNA] (ISOFORM 1)</scope>
    <scope>NUCLEOTIDE SEQUENCE [LARGE SCALE MRNA] OF 164-632 (ISOFORM 2)</scope>
    <source>
        <tissue>Salivary gland</tissue>
        <tissue>Uterine endothelium</tissue>
    </source>
</reference>
<reference key="3">
    <citation type="journal article" date="2004" name="Genome Res.">
        <title>The status, quality, and expansion of the NIH full-length cDNA project: the Mammalian Gene Collection (MGC).</title>
        <authorList>
            <consortium name="The MGC Project Team"/>
        </authorList>
    </citation>
    <scope>NUCLEOTIDE SEQUENCE [LARGE SCALE MRNA] (ISOFORM 1)</scope>
    <source>
        <tissue>Brain</tissue>
    </source>
</reference>
<reference key="4">
    <citation type="journal article" date="2014" name="J. Proteomics">
        <title>An enzyme assisted RP-RPLC approach for in-depth analysis of human liver phosphoproteome.</title>
        <authorList>
            <person name="Bian Y."/>
            <person name="Song C."/>
            <person name="Cheng K."/>
            <person name="Dong M."/>
            <person name="Wang F."/>
            <person name="Huang J."/>
            <person name="Sun D."/>
            <person name="Wang L."/>
            <person name="Ye M."/>
            <person name="Zou H."/>
        </authorList>
    </citation>
    <scope>IDENTIFICATION BY MASS SPECTROMETRY [LARGE SCALE ANALYSIS]</scope>
    <source>
        <tissue>Liver</tissue>
    </source>
</reference>
<reference key="5">
    <citation type="journal article" date="2016" name="Mol. Cell">
        <title>Mitoguardin regulates mitochondrial fusion through MitoPLD and is required for neuronal homeostasis.</title>
        <authorList>
            <person name="Zhang Y."/>
            <person name="Liu X."/>
            <person name="Bai J."/>
            <person name="Tian X."/>
            <person name="Zhao X."/>
            <person name="Liu W."/>
            <person name="Duan X."/>
            <person name="Shang W."/>
            <person name="Fan H.Y."/>
            <person name="Tong C."/>
        </authorList>
    </citation>
    <scope>FUNCTION</scope>
    <scope>SUBCELLULAR LOCATION</scope>
    <scope>SUBUNIT</scope>
    <scope>INTERACTION WITH MIGA2 AND PLD6</scope>
</reference>
<accession>Q8NAN2</accession>
<accession>Q6MZG0</accession>
<name>MIGA1_HUMAN</name>
<organism>
    <name type="scientific">Homo sapiens</name>
    <name type="common">Human</name>
    <dbReference type="NCBI Taxonomy" id="9606"/>
    <lineage>
        <taxon>Eukaryota</taxon>
        <taxon>Metazoa</taxon>
        <taxon>Chordata</taxon>
        <taxon>Craniata</taxon>
        <taxon>Vertebrata</taxon>
        <taxon>Euteleostomi</taxon>
        <taxon>Mammalia</taxon>
        <taxon>Eutheria</taxon>
        <taxon>Euarchontoglires</taxon>
        <taxon>Primates</taxon>
        <taxon>Haplorrhini</taxon>
        <taxon>Catarrhini</taxon>
        <taxon>Hominidae</taxon>
        <taxon>Homo</taxon>
    </lineage>
</organism>